<gene>
    <name evidence="1" type="primary">lpxK</name>
    <name type="ordered locus">SG0996</name>
</gene>
<protein>
    <recommendedName>
        <fullName evidence="1">Tetraacyldisaccharide 4'-kinase</fullName>
        <ecNumber evidence="1">2.7.1.130</ecNumber>
    </recommendedName>
    <alternativeName>
        <fullName evidence="1">Lipid A 4'-kinase</fullName>
    </alternativeName>
</protein>
<feature type="chain" id="PRO_0000291251" description="Tetraacyldisaccharide 4'-kinase">
    <location>
        <begin position="1"/>
        <end position="337"/>
    </location>
</feature>
<feature type="binding site" evidence="1">
    <location>
        <begin position="55"/>
        <end position="62"/>
    </location>
    <ligand>
        <name>ATP</name>
        <dbReference type="ChEBI" id="CHEBI:30616"/>
    </ligand>
</feature>
<reference key="1">
    <citation type="journal article" date="2006" name="Genome Res.">
        <title>Massive genome erosion and functional adaptations provide insights into the symbiotic lifestyle of Sodalis glossinidius in the tsetse host.</title>
        <authorList>
            <person name="Toh H."/>
            <person name="Weiss B.L."/>
            <person name="Perkin S.A.H."/>
            <person name="Yamashita A."/>
            <person name="Oshima K."/>
            <person name="Hattori M."/>
            <person name="Aksoy S."/>
        </authorList>
    </citation>
    <scope>NUCLEOTIDE SEQUENCE [LARGE SCALE GENOMIC DNA]</scope>
    <source>
        <strain>morsitans</strain>
    </source>
</reference>
<name>LPXK_SODGM</name>
<proteinExistence type="inferred from homology"/>
<organism>
    <name type="scientific">Sodalis glossinidius (strain morsitans)</name>
    <dbReference type="NCBI Taxonomy" id="343509"/>
    <lineage>
        <taxon>Bacteria</taxon>
        <taxon>Pseudomonadati</taxon>
        <taxon>Pseudomonadota</taxon>
        <taxon>Gammaproteobacteria</taxon>
        <taxon>Enterobacterales</taxon>
        <taxon>Bruguierivoracaceae</taxon>
        <taxon>Sodalis</taxon>
    </lineage>
</organism>
<keyword id="KW-0067">ATP-binding</keyword>
<keyword id="KW-0418">Kinase</keyword>
<keyword id="KW-0441">Lipid A biosynthesis</keyword>
<keyword id="KW-0444">Lipid biosynthesis</keyword>
<keyword id="KW-0443">Lipid metabolism</keyword>
<keyword id="KW-0547">Nucleotide-binding</keyword>
<keyword id="KW-0808">Transferase</keyword>
<comment type="function">
    <text evidence="1">Transfers the gamma-phosphate of ATP to the 4'-position of a tetraacyldisaccharide 1-phosphate intermediate (termed DS-1-P) to form tetraacyldisaccharide 1,4'-bis-phosphate (lipid IVA).</text>
</comment>
<comment type="catalytic activity">
    <reaction evidence="1">
        <text>a lipid A disaccharide + ATP = a lipid IVA + ADP + H(+)</text>
        <dbReference type="Rhea" id="RHEA:67840"/>
        <dbReference type="ChEBI" id="CHEBI:15378"/>
        <dbReference type="ChEBI" id="CHEBI:30616"/>
        <dbReference type="ChEBI" id="CHEBI:176343"/>
        <dbReference type="ChEBI" id="CHEBI:176425"/>
        <dbReference type="ChEBI" id="CHEBI:456216"/>
        <dbReference type="EC" id="2.7.1.130"/>
    </reaction>
</comment>
<comment type="pathway">
    <text evidence="1">Glycolipid biosynthesis; lipid IV(A) biosynthesis; lipid IV(A) from (3R)-3-hydroxytetradecanoyl-[acyl-carrier-protein] and UDP-N-acetyl-alpha-D-glucosamine: step 6/6.</text>
</comment>
<comment type="similarity">
    <text evidence="1">Belongs to the LpxK family.</text>
</comment>
<evidence type="ECO:0000255" key="1">
    <source>
        <dbReference type="HAMAP-Rule" id="MF_00409"/>
    </source>
</evidence>
<sequence>MIARIWSGASRLYWLLLPFSWLYGLITALIRFSYRRGWRKVHRFPLPIVVVGNLTAGGNGKTPVVLWLVAQLQQRGWRVGVVSRGYGGRAARYPLLLDATTTSDQCGDEPLLIWQRTGAPVAVAPRRSEAVAALLRAQSLDVVVTDDGLQHYALGRDIEWVVIDGERRFGNGWWLPAGPMRERAGRLQTVQAVIVNGGDARPGEVPMRLAAGPAVNLLSGERRALASLAPIVAIAGIGHPPRFFATLRAGGVTPVREVAFGDHQAYQQQMLDALVALEERLLMTEKDAVKCRAFARANWWYLPVDAQLPAGAEEALLTPILQAIRRCRPTADGEAKL</sequence>
<dbReference type="EC" id="2.7.1.130" evidence="1"/>
<dbReference type="EMBL" id="AP008232">
    <property type="protein sequence ID" value="BAE74271.1"/>
    <property type="molecule type" value="Genomic_DNA"/>
</dbReference>
<dbReference type="RefSeq" id="WP_011410857.1">
    <property type="nucleotide sequence ID" value="NC_007712.1"/>
</dbReference>
<dbReference type="SMR" id="Q2NUA4"/>
<dbReference type="STRING" id="343509.SG0996"/>
<dbReference type="KEGG" id="sgl:SG0996"/>
<dbReference type="eggNOG" id="COG1663">
    <property type="taxonomic scope" value="Bacteria"/>
</dbReference>
<dbReference type="HOGENOM" id="CLU_038816_2_0_6"/>
<dbReference type="OrthoDB" id="9766423at2"/>
<dbReference type="BioCyc" id="SGLO343509:SGP1_RS08520-MONOMER"/>
<dbReference type="UniPathway" id="UPA00359">
    <property type="reaction ID" value="UER00482"/>
</dbReference>
<dbReference type="Proteomes" id="UP000001932">
    <property type="component" value="Chromosome"/>
</dbReference>
<dbReference type="GO" id="GO:0005886">
    <property type="term" value="C:plasma membrane"/>
    <property type="evidence" value="ECO:0007669"/>
    <property type="project" value="TreeGrafter"/>
</dbReference>
<dbReference type="GO" id="GO:0005524">
    <property type="term" value="F:ATP binding"/>
    <property type="evidence" value="ECO:0007669"/>
    <property type="project" value="UniProtKB-UniRule"/>
</dbReference>
<dbReference type="GO" id="GO:0009029">
    <property type="term" value="F:tetraacyldisaccharide 4'-kinase activity"/>
    <property type="evidence" value="ECO:0007669"/>
    <property type="project" value="UniProtKB-UniRule"/>
</dbReference>
<dbReference type="GO" id="GO:0009245">
    <property type="term" value="P:lipid A biosynthetic process"/>
    <property type="evidence" value="ECO:0007669"/>
    <property type="project" value="UniProtKB-UniRule"/>
</dbReference>
<dbReference type="GO" id="GO:0009244">
    <property type="term" value="P:lipopolysaccharide core region biosynthetic process"/>
    <property type="evidence" value="ECO:0007669"/>
    <property type="project" value="TreeGrafter"/>
</dbReference>
<dbReference type="HAMAP" id="MF_00409">
    <property type="entry name" value="LpxK"/>
    <property type="match status" value="1"/>
</dbReference>
<dbReference type="InterPro" id="IPR003758">
    <property type="entry name" value="LpxK"/>
</dbReference>
<dbReference type="InterPro" id="IPR027417">
    <property type="entry name" value="P-loop_NTPase"/>
</dbReference>
<dbReference type="NCBIfam" id="TIGR00682">
    <property type="entry name" value="lpxK"/>
    <property type="match status" value="1"/>
</dbReference>
<dbReference type="PANTHER" id="PTHR42724">
    <property type="entry name" value="TETRAACYLDISACCHARIDE 4'-KINASE"/>
    <property type="match status" value="1"/>
</dbReference>
<dbReference type="PANTHER" id="PTHR42724:SF1">
    <property type="entry name" value="TETRAACYLDISACCHARIDE 4'-KINASE, MITOCHONDRIAL-RELATED"/>
    <property type="match status" value="1"/>
</dbReference>
<dbReference type="Pfam" id="PF02606">
    <property type="entry name" value="LpxK"/>
    <property type="match status" value="1"/>
</dbReference>
<dbReference type="SUPFAM" id="SSF52540">
    <property type="entry name" value="P-loop containing nucleoside triphosphate hydrolases"/>
    <property type="match status" value="1"/>
</dbReference>
<accession>Q2NUA4</accession>